<keyword id="KW-0326">Glycosidase</keyword>
<keyword id="KW-0378">Hydrolase</keyword>
<keyword id="KW-1185">Reference proteome</keyword>
<sequence>MIYMGGIVGNNSLLAKIGDYGEIEYLFYPQVGYETHFFDSALAVYDKKVKWHWDDDWDITQKYIEETNIFKTILEDDKIILTIKDFVPVSHNVLIRRVYIKNKLDKKLNFKLFFYENLRIGENPITNTVKFLEDGCIVKYNGKYIFCIGSDKRIDSFQCGNRYSKTSAYIDIENGILKEHKESSGLLTDSAISWNIKIDEKRSLAFNIYILPQRFDGDFSIITEQLKIIMNNSENIKNLSMNYWKHIIGEINRFIHPELRQNNKIYSITKRALMTLLMLCDKEGGIIAAPSLHPDYRYVWGRDGSYISIALDLFGIRNIPDRFFEFMSKIQNADGSWLQNYYVNGKPRLTAIQTDQIGSILWAMDVHYRLTGDRKFVERYWNTIEKAANYLRLVALNFTPCFDLWEERFGVFAYTMGATYAGLKCAYSMSKAVNKRDKVKDWGKTIEFLKHEVPKRFYLEDEERFAKSINPLDKTIDTSILGLSYPFNLIDVDDERMIKTAEAIEKAFKYKVGGIGRYPEDIYFGGNPWIITTLWLSLYYRRLYKVLKEKDDNGADIYLQKSKKLFNWVMKYSFDGLFPEQIHKELGVPMSAMPLGWSNAMFLIYVYENDKVIIP</sequence>
<reference key="1">
    <citation type="journal article" date="1996" name="Science">
        <title>Complete genome sequence of the methanogenic archaeon, Methanococcus jannaschii.</title>
        <authorList>
            <person name="Bult C.J."/>
            <person name="White O."/>
            <person name="Olsen G.J."/>
            <person name="Zhou L."/>
            <person name="Fleischmann R.D."/>
            <person name="Sutton G.G."/>
            <person name="Blake J.A."/>
            <person name="FitzGerald L.M."/>
            <person name="Clayton R.A."/>
            <person name="Gocayne J.D."/>
            <person name="Kerlavage A.R."/>
            <person name="Dougherty B.A."/>
            <person name="Tomb J.-F."/>
            <person name="Adams M.D."/>
            <person name="Reich C.I."/>
            <person name="Overbeek R."/>
            <person name="Kirkness E.F."/>
            <person name="Weinstock K.G."/>
            <person name="Merrick J.M."/>
            <person name="Glodek A."/>
            <person name="Scott J.L."/>
            <person name="Geoghagen N.S.M."/>
            <person name="Weidman J.F."/>
            <person name="Fuhrmann J.L."/>
            <person name="Nguyen D."/>
            <person name="Utterback T.R."/>
            <person name="Kelley J.M."/>
            <person name="Peterson J.D."/>
            <person name="Sadow P.W."/>
            <person name="Hanna M.C."/>
            <person name="Cotton M.D."/>
            <person name="Roberts K.M."/>
            <person name="Hurst M.A."/>
            <person name="Kaine B.P."/>
            <person name="Borodovsky M."/>
            <person name="Klenk H.-P."/>
            <person name="Fraser C.M."/>
            <person name="Smith H.O."/>
            <person name="Woese C.R."/>
            <person name="Venter J.C."/>
        </authorList>
    </citation>
    <scope>NUCLEOTIDE SEQUENCE [LARGE SCALE GENOMIC DNA]</scope>
    <source>
        <strain>ATCC 43067 / DSM 2661 / JAL-1 / JCM 10045 / NBRC 100440</strain>
    </source>
</reference>
<proteinExistence type="inferred from homology"/>
<evidence type="ECO:0000255" key="1">
    <source>
        <dbReference type="PROSITE-ProRule" id="PRU10051"/>
    </source>
</evidence>
<evidence type="ECO:0000305" key="2"/>
<organism>
    <name type="scientific">Methanocaldococcus jannaschii (strain ATCC 43067 / DSM 2661 / JAL-1 / JCM 10045 / NBRC 100440)</name>
    <name type="common">Methanococcus jannaschii</name>
    <dbReference type="NCBI Taxonomy" id="243232"/>
    <lineage>
        <taxon>Archaea</taxon>
        <taxon>Methanobacteriati</taxon>
        <taxon>Methanobacteriota</taxon>
        <taxon>Methanomada group</taxon>
        <taxon>Methanococci</taxon>
        <taxon>Methanococcales</taxon>
        <taxon>Methanocaldococcaceae</taxon>
        <taxon>Methanocaldococcus</taxon>
    </lineage>
</organism>
<gene>
    <name type="ordered locus">MJ1610</name>
</gene>
<accession>Q59005</accession>
<name>Y1610_METJA</name>
<protein>
    <recommendedName>
        <fullName>Uncharacterized glycosyl hydrolase MJ1610</fullName>
        <ecNumber>3.2.1.-</ecNumber>
    </recommendedName>
</protein>
<feature type="chain" id="PRO_0000186121" description="Uncharacterized glycosyl hydrolase MJ1610">
    <location>
        <begin position="1"/>
        <end position="615"/>
    </location>
</feature>
<feature type="active site" description="Proton acceptor" evidence="1">
    <location>
        <position position="403"/>
    </location>
</feature>
<feature type="active site" description="Proton donor" evidence="1">
    <location>
        <position position="406"/>
    </location>
</feature>
<dbReference type="EC" id="3.2.1.-"/>
<dbReference type="EMBL" id="L77117">
    <property type="protein sequence ID" value="AAB99630.1"/>
    <property type="molecule type" value="Genomic_DNA"/>
</dbReference>
<dbReference type="PIR" id="A64501">
    <property type="entry name" value="A64501"/>
</dbReference>
<dbReference type="SMR" id="Q59005"/>
<dbReference type="STRING" id="243232.MJ_1610"/>
<dbReference type="CAZy" id="GH15">
    <property type="family name" value="Glycoside Hydrolase Family 15"/>
</dbReference>
<dbReference type="PaxDb" id="243232-MJ_1610"/>
<dbReference type="EnsemblBacteria" id="AAB99630">
    <property type="protein sequence ID" value="AAB99630"/>
    <property type="gene ID" value="MJ_1610"/>
</dbReference>
<dbReference type="KEGG" id="mja:MJ_1610"/>
<dbReference type="eggNOG" id="arCOG03285">
    <property type="taxonomic scope" value="Archaea"/>
</dbReference>
<dbReference type="HOGENOM" id="CLU_028187_0_0_2"/>
<dbReference type="InParanoid" id="Q59005"/>
<dbReference type="PhylomeDB" id="Q59005"/>
<dbReference type="Proteomes" id="UP000000805">
    <property type="component" value="Chromosome"/>
</dbReference>
<dbReference type="GO" id="GO:0004553">
    <property type="term" value="F:hydrolase activity, hydrolyzing O-glycosyl compounds"/>
    <property type="evidence" value="ECO:0000318"/>
    <property type="project" value="GO_Central"/>
</dbReference>
<dbReference type="GO" id="GO:0005975">
    <property type="term" value="P:carbohydrate metabolic process"/>
    <property type="evidence" value="ECO:0007669"/>
    <property type="project" value="InterPro"/>
</dbReference>
<dbReference type="Gene3D" id="1.50.10.10">
    <property type="match status" value="1"/>
</dbReference>
<dbReference type="InterPro" id="IPR008928">
    <property type="entry name" value="6-hairpin_glycosidase_sf"/>
</dbReference>
<dbReference type="InterPro" id="IPR012341">
    <property type="entry name" value="6hp_glycosidase-like_sf"/>
</dbReference>
<dbReference type="InterPro" id="IPR011613">
    <property type="entry name" value="GH15-like"/>
</dbReference>
<dbReference type="InterPro" id="IPR046966">
    <property type="entry name" value="Glucoamylase_active_site"/>
</dbReference>
<dbReference type="InterPro" id="IPR006465">
    <property type="entry name" value="Oligosac_amylase"/>
</dbReference>
<dbReference type="NCBIfam" id="TIGR01577">
    <property type="entry name" value="oligosac_amyl"/>
    <property type="match status" value="1"/>
</dbReference>
<dbReference type="PANTHER" id="PTHR31616:SF0">
    <property type="entry name" value="GLUCAN 1,4-ALPHA-GLUCOSIDASE"/>
    <property type="match status" value="1"/>
</dbReference>
<dbReference type="PANTHER" id="PTHR31616">
    <property type="entry name" value="TREHALASE"/>
    <property type="match status" value="1"/>
</dbReference>
<dbReference type="Pfam" id="PF00723">
    <property type="entry name" value="Glyco_hydro_15"/>
    <property type="match status" value="1"/>
</dbReference>
<dbReference type="SUPFAM" id="SSF48208">
    <property type="entry name" value="Six-hairpin glycosidases"/>
    <property type="match status" value="1"/>
</dbReference>
<dbReference type="PROSITE" id="PS00820">
    <property type="entry name" value="GLUCOAMYLASE"/>
    <property type="match status" value="1"/>
</dbReference>
<comment type="similarity">
    <text evidence="2">Belongs to the glycosyl hydrolase 15 family.</text>
</comment>